<feature type="chain" id="PRO_0000294655" description="ATP-dependent RNA helicase DBP8">
    <location>
        <begin position="1"/>
        <end position="444"/>
    </location>
</feature>
<feature type="domain" description="Helicase ATP-binding" evidence="2">
    <location>
        <begin position="34"/>
        <end position="210"/>
    </location>
</feature>
<feature type="domain" description="Helicase C-terminal" evidence="3">
    <location>
        <begin position="244"/>
        <end position="390"/>
    </location>
</feature>
<feature type="region of interest" description="Disordered" evidence="4">
    <location>
        <begin position="402"/>
        <end position="444"/>
    </location>
</feature>
<feature type="short sequence motif" description="Q motif">
    <location>
        <begin position="3"/>
        <end position="31"/>
    </location>
</feature>
<feature type="short sequence motif" description="DEAD box">
    <location>
        <begin position="156"/>
        <end position="159"/>
    </location>
</feature>
<feature type="compositionally biased region" description="Basic and acidic residues" evidence="4">
    <location>
        <begin position="402"/>
        <end position="418"/>
    </location>
</feature>
<feature type="compositionally biased region" description="Basic residues" evidence="4">
    <location>
        <begin position="434"/>
        <end position="444"/>
    </location>
</feature>
<feature type="binding site" evidence="2">
    <location>
        <begin position="47"/>
        <end position="54"/>
    </location>
    <ligand>
        <name>ATP</name>
        <dbReference type="ChEBI" id="CHEBI:30616"/>
    </ligand>
</feature>
<sequence>MPQSFKELGVAKWLSESLEAMKIHSPTSIQSACIPEILKGRDCIGGAKTGSGKTIAFAALMLTQWSQDPFGIFGLILTPTRELALQIAEQFAALGALMNIKVCVVVGGEDFVKQTLELQKKPHFVIATPGRLADHILNSGEETVSGLRRIKYLVLDEADRLLSNSFGSDLQRCFTILPPSEKRQTLLFTATVTDAVKALKDKPRAEGKLPVFLHQVDAGVDQIAIPKTLSTMYVFVPSYVKEAYLTSILKLPKYEESTAVVFVNRTMTAEVLRRMLRKLEFKVASLHSEMPQTERTNSLHRFKAGAARILIATDVASRGLDIPTVELVVNFDIPADPDDFIHRVGRTARAGRKGDAISIIGEKDIERIESIEERINKKMELLEGVDDDKVINDSLQKATTAKREAMLDMDKESFGERRKVNKKKRAVEEPSGKRQQKKVKKVKS</sequence>
<evidence type="ECO:0000250" key="1"/>
<evidence type="ECO:0000255" key="2">
    <source>
        <dbReference type="PROSITE-ProRule" id="PRU00541"/>
    </source>
</evidence>
<evidence type="ECO:0000255" key="3">
    <source>
        <dbReference type="PROSITE-ProRule" id="PRU00542"/>
    </source>
</evidence>
<evidence type="ECO:0000256" key="4">
    <source>
        <dbReference type="SAM" id="MobiDB-lite"/>
    </source>
</evidence>
<evidence type="ECO:0000305" key="5"/>
<comment type="function">
    <text evidence="1">ATP-binding RNA helicase involved in 40S ribosomal subunit biogenesis and is required for the normal formation of 18S rRNAs through pre-rRNA processing at A0, A1 and A2 sites. Required for vegetative growth (By similarity).</text>
</comment>
<comment type="catalytic activity">
    <reaction>
        <text>ATP + H2O = ADP + phosphate + H(+)</text>
        <dbReference type="Rhea" id="RHEA:13065"/>
        <dbReference type="ChEBI" id="CHEBI:15377"/>
        <dbReference type="ChEBI" id="CHEBI:15378"/>
        <dbReference type="ChEBI" id="CHEBI:30616"/>
        <dbReference type="ChEBI" id="CHEBI:43474"/>
        <dbReference type="ChEBI" id="CHEBI:456216"/>
        <dbReference type="EC" id="3.6.4.13"/>
    </reaction>
</comment>
<comment type="subcellular location">
    <subcellularLocation>
        <location evidence="1">Nucleus</location>
        <location evidence="1">Nucleolus</location>
    </subcellularLocation>
</comment>
<comment type="domain">
    <text>The Q motif is unique to and characteristic of the DEAD box family of RNA helicases and controls ATP binding and hydrolysis.</text>
</comment>
<comment type="similarity">
    <text evidence="5">Belongs to the DEAD box helicase family. DDX49/DBP8 subfamily.</text>
</comment>
<keyword id="KW-0067">ATP-binding</keyword>
<keyword id="KW-0347">Helicase</keyword>
<keyword id="KW-0378">Hydrolase</keyword>
<keyword id="KW-0547">Nucleotide-binding</keyword>
<keyword id="KW-0539">Nucleus</keyword>
<keyword id="KW-1185">Reference proteome</keyword>
<keyword id="KW-0690">Ribosome biogenesis</keyword>
<keyword id="KW-0694">RNA-binding</keyword>
<keyword id="KW-0698">rRNA processing</keyword>
<reference key="1">
    <citation type="journal article" date="2009" name="Nature">
        <title>Evolution of pathogenicity and sexual reproduction in eight Candida genomes.</title>
        <authorList>
            <person name="Butler G."/>
            <person name="Rasmussen M.D."/>
            <person name="Lin M.F."/>
            <person name="Santos M.A.S."/>
            <person name="Sakthikumar S."/>
            <person name="Munro C.A."/>
            <person name="Rheinbay E."/>
            <person name="Grabherr M."/>
            <person name="Forche A."/>
            <person name="Reedy J.L."/>
            <person name="Agrafioti I."/>
            <person name="Arnaud M.B."/>
            <person name="Bates S."/>
            <person name="Brown A.J.P."/>
            <person name="Brunke S."/>
            <person name="Costanzo M.C."/>
            <person name="Fitzpatrick D.A."/>
            <person name="de Groot P.W.J."/>
            <person name="Harris D."/>
            <person name="Hoyer L.L."/>
            <person name="Hube B."/>
            <person name="Klis F.M."/>
            <person name="Kodira C."/>
            <person name="Lennard N."/>
            <person name="Logue M.E."/>
            <person name="Martin R."/>
            <person name="Neiman A.M."/>
            <person name="Nikolaou E."/>
            <person name="Quail M.A."/>
            <person name="Quinn J."/>
            <person name="Santos M.C."/>
            <person name="Schmitzberger F.F."/>
            <person name="Sherlock G."/>
            <person name="Shah P."/>
            <person name="Silverstein K.A.T."/>
            <person name="Skrzypek M.S."/>
            <person name="Soll D."/>
            <person name="Staggs R."/>
            <person name="Stansfield I."/>
            <person name="Stumpf M.P.H."/>
            <person name="Sudbery P.E."/>
            <person name="Srikantha T."/>
            <person name="Zeng Q."/>
            <person name="Berman J."/>
            <person name="Berriman M."/>
            <person name="Heitman J."/>
            <person name="Gow N.A.R."/>
            <person name="Lorenz M.C."/>
            <person name="Birren B.W."/>
            <person name="Kellis M."/>
            <person name="Cuomo C.A."/>
        </authorList>
    </citation>
    <scope>NUCLEOTIDE SEQUENCE [LARGE SCALE GENOMIC DNA]</scope>
    <source>
        <strain>ATCC 11503 / BCRC 21390 / CBS 2605 / JCM 1781 / NBRC 1676 / NRRL YB-4239</strain>
    </source>
</reference>
<organism>
    <name type="scientific">Lodderomyces elongisporus (strain ATCC 11503 / CBS 2605 / JCM 1781 / NBRC 1676 / NRRL YB-4239)</name>
    <name type="common">Yeast</name>
    <name type="synonym">Saccharomyces elongisporus</name>
    <dbReference type="NCBI Taxonomy" id="379508"/>
    <lineage>
        <taxon>Eukaryota</taxon>
        <taxon>Fungi</taxon>
        <taxon>Dikarya</taxon>
        <taxon>Ascomycota</taxon>
        <taxon>Saccharomycotina</taxon>
        <taxon>Pichiomycetes</taxon>
        <taxon>Debaryomycetaceae</taxon>
        <taxon>Candida/Lodderomyces clade</taxon>
        <taxon>Lodderomyces</taxon>
    </lineage>
</organism>
<accession>A5E0U9</accession>
<protein>
    <recommendedName>
        <fullName>ATP-dependent RNA helicase DBP8</fullName>
        <ecNumber>3.6.4.13</ecNumber>
    </recommendedName>
</protein>
<proteinExistence type="inferred from homology"/>
<gene>
    <name type="primary">DBP8</name>
    <name type="ORF">LELG_03236</name>
</gene>
<name>DBP8_LODEL</name>
<dbReference type="EC" id="3.6.4.13"/>
<dbReference type="EMBL" id="CH981527">
    <property type="protein sequence ID" value="EDK45057.1"/>
    <property type="molecule type" value="Genomic_DNA"/>
</dbReference>
<dbReference type="RefSeq" id="XP_001525308.1">
    <property type="nucleotide sequence ID" value="XM_001525258.1"/>
</dbReference>
<dbReference type="SMR" id="A5E0U9"/>
<dbReference type="FunCoup" id="A5E0U9">
    <property type="interactions" value="837"/>
</dbReference>
<dbReference type="STRING" id="379508.A5E0U9"/>
<dbReference type="GeneID" id="5232427"/>
<dbReference type="KEGG" id="lel:PVL30_002732"/>
<dbReference type="VEuPathDB" id="FungiDB:LELG_03236"/>
<dbReference type="eggNOG" id="KOG0340">
    <property type="taxonomic scope" value="Eukaryota"/>
</dbReference>
<dbReference type="HOGENOM" id="CLU_003041_1_1_1"/>
<dbReference type="InParanoid" id="A5E0U9"/>
<dbReference type="OMA" id="IMIFTDT"/>
<dbReference type="OrthoDB" id="10261904at2759"/>
<dbReference type="Proteomes" id="UP000001996">
    <property type="component" value="Unassembled WGS sequence"/>
</dbReference>
<dbReference type="GO" id="GO:0005829">
    <property type="term" value="C:cytosol"/>
    <property type="evidence" value="ECO:0007669"/>
    <property type="project" value="TreeGrafter"/>
</dbReference>
<dbReference type="GO" id="GO:0005730">
    <property type="term" value="C:nucleolus"/>
    <property type="evidence" value="ECO:0007669"/>
    <property type="project" value="UniProtKB-SubCell"/>
</dbReference>
<dbReference type="GO" id="GO:0032040">
    <property type="term" value="C:small-subunit processome"/>
    <property type="evidence" value="ECO:0007669"/>
    <property type="project" value="EnsemblFungi"/>
</dbReference>
<dbReference type="GO" id="GO:0005524">
    <property type="term" value="F:ATP binding"/>
    <property type="evidence" value="ECO:0007669"/>
    <property type="project" value="UniProtKB-KW"/>
</dbReference>
<dbReference type="GO" id="GO:0016887">
    <property type="term" value="F:ATP hydrolysis activity"/>
    <property type="evidence" value="ECO:0007669"/>
    <property type="project" value="EnsemblFungi"/>
</dbReference>
<dbReference type="GO" id="GO:0003723">
    <property type="term" value="F:RNA binding"/>
    <property type="evidence" value="ECO:0007669"/>
    <property type="project" value="UniProtKB-KW"/>
</dbReference>
<dbReference type="GO" id="GO:0003724">
    <property type="term" value="F:RNA helicase activity"/>
    <property type="evidence" value="ECO:0007669"/>
    <property type="project" value="UniProtKB-EC"/>
</dbReference>
<dbReference type="GO" id="GO:0000480">
    <property type="term" value="P:endonucleolytic cleavage in 5'-ETS of tricistronic rRNA transcript (SSU-rRNA, 5.8S rRNA, LSU-rRNA)"/>
    <property type="evidence" value="ECO:0007669"/>
    <property type="project" value="EnsemblFungi"/>
</dbReference>
<dbReference type="GO" id="GO:0000447">
    <property type="term" value="P:endonucleolytic cleavage in ITS1 to separate SSU-rRNA from 5.8S rRNA and LSU-rRNA from tricistronic rRNA transcript (SSU-rRNA, 5.8S rRNA, LSU-rRNA)"/>
    <property type="evidence" value="ECO:0007669"/>
    <property type="project" value="EnsemblFungi"/>
</dbReference>
<dbReference type="GO" id="GO:0000472">
    <property type="term" value="P:endonucleolytic cleavage to generate mature 5'-end of SSU-rRNA from (SSU-rRNA, 5.8S rRNA, LSU-rRNA)"/>
    <property type="evidence" value="ECO:0007669"/>
    <property type="project" value="EnsemblFungi"/>
</dbReference>
<dbReference type="CDD" id="cd17955">
    <property type="entry name" value="DEADc_DDX49"/>
    <property type="match status" value="1"/>
</dbReference>
<dbReference type="CDD" id="cd18787">
    <property type="entry name" value="SF2_C_DEAD"/>
    <property type="match status" value="1"/>
</dbReference>
<dbReference type="Gene3D" id="3.40.50.300">
    <property type="entry name" value="P-loop containing nucleotide triphosphate hydrolases"/>
    <property type="match status" value="2"/>
</dbReference>
<dbReference type="InterPro" id="IPR011545">
    <property type="entry name" value="DEAD/DEAH_box_helicase_dom"/>
</dbReference>
<dbReference type="InterPro" id="IPR050079">
    <property type="entry name" value="DEAD_box_RNA_helicase"/>
</dbReference>
<dbReference type="InterPro" id="IPR014001">
    <property type="entry name" value="Helicase_ATP-bd"/>
</dbReference>
<dbReference type="InterPro" id="IPR001650">
    <property type="entry name" value="Helicase_C-like"/>
</dbReference>
<dbReference type="InterPro" id="IPR027417">
    <property type="entry name" value="P-loop_NTPase"/>
</dbReference>
<dbReference type="InterPro" id="IPR000629">
    <property type="entry name" value="RNA-helicase_DEAD-box_CS"/>
</dbReference>
<dbReference type="InterPro" id="IPR014014">
    <property type="entry name" value="RNA_helicase_DEAD_Q_motif"/>
</dbReference>
<dbReference type="PANTHER" id="PTHR47959:SF24">
    <property type="entry name" value="ATP-DEPENDENT RNA HELICASE"/>
    <property type="match status" value="1"/>
</dbReference>
<dbReference type="PANTHER" id="PTHR47959">
    <property type="entry name" value="ATP-DEPENDENT RNA HELICASE RHLE-RELATED"/>
    <property type="match status" value="1"/>
</dbReference>
<dbReference type="Pfam" id="PF00270">
    <property type="entry name" value="DEAD"/>
    <property type="match status" value="1"/>
</dbReference>
<dbReference type="Pfam" id="PF00271">
    <property type="entry name" value="Helicase_C"/>
    <property type="match status" value="1"/>
</dbReference>
<dbReference type="SMART" id="SM00487">
    <property type="entry name" value="DEXDc"/>
    <property type="match status" value="1"/>
</dbReference>
<dbReference type="SMART" id="SM00490">
    <property type="entry name" value="HELICc"/>
    <property type="match status" value="1"/>
</dbReference>
<dbReference type="SUPFAM" id="SSF52540">
    <property type="entry name" value="P-loop containing nucleoside triphosphate hydrolases"/>
    <property type="match status" value="1"/>
</dbReference>
<dbReference type="PROSITE" id="PS00039">
    <property type="entry name" value="DEAD_ATP_HELICASE"/>
    <property type="match status" value="1"/>
</dbReference>
<dbReference type="PROSITE" id="PS51192">
    <property type="entry name" value="HELICASE_ATP_BIND_1"/>
    <property type="match status" value="1"/>
</dbReference>
<dbReference type="PROSITE" id="PS51194">
    <property type="entry name" value="HELICASE_CTER"/>
    <property type="match status" value="1"/>
</dbReference>
<dbReference type="PROSITE" id="PS51195">
    <property type="entry name" value="Q_MOTIF"/>
    <property type="match status" value="1"/>
</dbReference>